<gene>
    <name evidence="1" type="primary">xseA</name>
    <name type="ordered locus">Sbal223_1378</name>
</gene>
<sequence>MQGTKNNIYTVSRLNGEVRQILEGQLGKIWLNGEISNFSSPSSGHWYLTLKDHSSQIRCAMFKGRNQTVSFKPINGQQVLVKGAISVYEPRGDYQLLIESMLPAGDGLLAQQFDALKMKLAAEGLFAADTKRRLPKNIQRIGVITSPTGAAIRDVLHVLARRDPSIEVIIYPTQVQGETAAQSICQAINIANQRLEVDVLLLTRGGGSLEDLWCFNSEALAHTIYNSALPVVSAVGHEVDTTISDYVADIRAPTPSAGAELLSQDSDNKAQKLATALSRLQQSAKHYQLKQERRLSLLEHRLQRQDPKRTLQQFEQRFDEMQLRLESALSNRLHILSRRQQLLASRLEQQSPKHKLAIEGNRLSYLASRLQDALQDKLSQSEQRIKYVAHQLETVSPLATLSRGYSITTDIHNQVVDSTDKLTIGDSLQTRLRHGQVISTVTQIKPLE</sequence>
<feature type="chain" id="PRO_1000200679" description="Exodeoxyribonuclease 7 large subunit">
    <location>
        <begin position="1"/>
        <end position="448"/>
    </location>
</feature>
<keyword id="KW-0963">Cytoplasm</keyword>
<keyword id="KW-0269">Exonuclease</keyword>
<keyword id="KW-0378">Hydrolase</keyword>
<keyword id="KW-0540">Nuclease</keyword>
<accession>B8E9T2</accession>
<reference key="1">
    <citation type="submission" date="2008-12" db="EMBL/GenBank/DDBJ databases">
        <title>Complete sequence of chromosome of Shewanella baltica OS223.</title>
        <authorList>
            <consortium name="US DOE Joint Genome Institute"/>
            <person name="Lucas S."/>
            <person name="Copeland A."/>
            <person name="Lapidus A."/>
            <person name="Glavina del Rio T."/>
            <person name="Dalin E."/>
            <person name="Tice H."/>
            <person name="Bruce D."/>
            <person name="Goodwin L."/>
            <person name="Pitluck S."/>
            <person name="Chertkov O."/>
            <person name="Meincke L."/>
            <person name="Brettin T."/>
            <person name="Detter J.C."/>
            <person name="Han C."/>
            <person name="Kuske C.R."/>
            <person name="Larimer F."/>
            <person name="Land M."/>
            <person name="Hauser L."/>
            <person name="Kyrpides N."/>
            <person name="Ovchinnikova G."/>
            <person name="Brettar I."/>
            <person name="Rodrigues J."/>
            <person name="Konstantinidis K."/>
            <person name="Tiedje J."/>
        </authorList>
    </citation>
    <scope>NUCLEOTIDE SEQUENCE [LARGE SCALE GENOMIC DNA]</scope>
    <source>
        <strain>OS223</strain>
    </source>
</reference>
<protein>
    <recommendedName>
        <fullName evidence="1">Exodeoxyribonuclease 7 large subunit</fullName>
        <ecNumber evidence="1">3.1.11.6</ecNumber>
    </recommendedName>
    <alternativeName>
        <fullName evidence="1">Exodeoxyribonuclease VII large subunit</fullName>
        <shortName evidence="1">Exonuclease VII large subunit</shortName>
    </alternativeName>
</protein>
<name>EX7L_SHEB2</name>
<comment type="function">
    <text evidence="1">Bidirectionally degrades single-stranded DNA into large acid-insoluble oligonucleotides, which are then degraded further into small acid-soluble oligonucleotides.</text>
</comment>
<comment type="catalytic activity">
    <reaction evidence="1">
        <text>Exonucleolytic cleavage in either 5'- to 3'- or 3'- to 5'-direction to yield nucleoside 5'-phosphates.</text>
        <dbReference type="EC" id="3.1.11.6"/>
    </reaction>
</comment>
<comment type="subunit">
    <text evidence="1">Heterooligomer composed of large and small subunits.</text>
</comment>
<comment type="subcellular location">
    <subcellularLocation>
        <location evidence="1">Cytoplasm</location>
    </subcellularLocation>
</comment>
<comment type="similarity">
    <text evidence="1">Belongs to the XseA family.</text>
</comment>
<evidence type="ECO:0000255" key="1">
    <source>
        <dbReference type="HAMAP-Rule" id="MF_00378"/>
    </source>
</evidence>
<organism>
    <name type="scientific">Shewanella baltica (strain OS223)</name>
    <dbReference type="NCBI Taxonomy" id="407976"/>
    <lineage>
        <taxon>Bacteria</taxon>
        <taxon>Pseudomonadati</taxon>
        <taxon>Pseudomonadota</taxon>
        <taxon>Gammaproteobacteria</taxon>
        <taxon>Alteromonadales</taxon>
        <taxon>Shewanellaceae</taxon>
        <taxon>Shewanella</taxon>
    </lineage>
</organism>
<proteinExistence type="inferred from homology"/>
<dbReference type="EC" id="3.1.11.6" evidence="1"/>
<dbReference type="EMBL" id="CP001252">
    <property type="protein sequence ID" value="ACK45886.1"/>
    <property type="molecule type" value="Genomic_DNA"/>
</dbReference>
<dbReference type="RefSeq" id="WP_012587187.1">
    <property type="nucleotide sequence ID" value="NC_011663.1"/>
</dbReference>
<dbReference type="SMR" id="B8E9T2"/>
<dbReference type="KEGG" id="sbp:Sbal223_1378"/>
<dbReference type="HOGENOM" id="CLU_023625_3_1_6"/>
<dbReference type="Proteomes" id="UP000002507">
    <property type="component" value="Chromosome"/>
</dbReference>
<dbReference type="GO" id="GO:0005737">
    <property type="term" value="C:cytoplasm"/>
    <property type="evidence" value="ECO:0007669"/>
    <property type="project" value="UniProtKB-SubCell"/>
</dbReference>
<dbReference type="GO" id="GO:0009318">
    <property type="term" value="C:exodeoxyribonuclease VII complex"/>
    <property type="evidence" value="ECO:0007669"/>
    <property type="project" value="InterPro"/>
</dbReference>
<dbReference type="GO" id="GO:0008855">
    <property type="term" value="F:exodeoxyribonuclease VII activity"/>
    <property type="evidence" value="ECO:0007669"/>
    <property type="project" value="UniProtKB-UniRule"/>
</dbReference>
<dbReference type="GO" id="GO:0003676">
    <property type="term" value="F:nucleic acid binding"/>
    <property type="evidence" value="ECO:0007669"/>
    <property type="project" value="InterPro"/>
</dbReference>
<dbReference type="GO" id="GO:0006308">
    <property type="term" value="P:DNA catabolic process"/>
    <property type="evidence" value="ECO:0007669"/>
    <property type="project" value="UniProtKB-UniRule"/>
</dbReference>
<dbReference type="CDD" id="cd04489">
    <property type="entry name" value="ExoVII_LU_OBF"/>
    <property type="match status" value="1"/>
</dbReference>
<dbReference type="HAMAP" id="MF_00378">
    <property type="entry name" value="Exonuc_7_L"/>
    <property type="match status" value="1"/>
</dbReference>
<dbReference type="InterPro" id="IPR003753">
    <property type="entry name" value="Exonuc_VII_L"/>
</dbReference>
<dbReference type="InterPro" id="IPR020579">
    <property type="entry name" value="Exonuc_VII_lsu_C"/>
</dbReference>
<dbReference type="InterPro" id="IPR025824">
    <property type="entry name" value="OB-fold_nuc-bd_dom"/>
</dbReference>
<dbReference type="NCBIfam" id="TIGR00237">
    <property type="entry name" value="xseA"/>
    <property type="match status" value="1"/>
</dbReference>
<dbReference type="PANTHER" id="PTHR30008">
    <property type="entry name" value="EXODEOXYRIBONUCLEASE 7 LARGE SUBUNIT"/>
    <property type="match status" value="1"/>
</dbReference>
<dbReference type="PANTHER" id="PTHR30008:SF0">
    <property type="entry name" value="EXODEOXYRIBONUCLEASE 7 LARGE SUBUNIT"/>
    <property type="match status" value="1"/>
</dbReference>
<dbReference type="Pfam" id="PF02601">
    <property type="entry name" value="Exonuc_VII_L"/>
    <property type="match status" value="1"/>
</dbReference>
<dbReference type="Pfam" id="PF13742">
    <property type="entry name" value="tRNA_anti_2"/>
    <property type="match status" value="1"/>
</dbReference>